<name>BGALC_SCLS1</name>
<organism>
    <name type="scientific">Sclerotinia sclerotiorum (strain ATCC 18683 / 1980 / Ss-1)</name>
    <name type="common">White mold</name>
    <name type="synonym">Whetzelinia sclerotiorum</name>
    <dbReference type="NCBI Taxonomy" id="665079"/>
    <lineage>
        <taxon>Eukaryota</taxon>
        <taxon>Fungi</taxon>
        <taxon>Dikarya</taxon>
        <taxon>Ascomycota</taxon>
        <taxon>Pezizomycotina</taxon>
        <taxon>Leotiomycetes</taxon>
        <taxon>Helotiales</taxon>
        <taxon>Sclerotiniaceae</taxon>
        <taxon>Sclerotinia</taxon>
    </lineage>
</organism>
<keyword id="KW-0119">Carbohydrate metabolism</keyword>
<keyword id="KW-1015">Disulfide bond</keyword>
<keyword id="KW-0325">Glycoprotein</keyword>
<keyword id="KW-0326">Glycosidase</keyword>
<keyword id="KW-0378">Hydrolase</keyword>
<keyword id="KW-0624">Polysaccharide degradation</keyword>
<keyword id="KW-1185">Reference proteome</keyword>
<keyword id="KW-0964">Secreted</keyword>
<keyword id="KW-0732">Signal</keyword>
<sequence length="984" mass="107521">MRLLNIFTTLCLLLWSGAATNDGLTDVVEWDPYSLTINGDRVFIYSAEFHYQRMPVPELWLDIFQKFRANGFNTISVYFFWSYHEASKGSFDFETSGKNVQRVLDYAKEAGIYVIARAGPYCNAETSAGGLALWGSDGSMGTLRTNNAAYYQSWQPWIKEIGAILAKNQVTNGGPVILNQVENELQETVHSATNTLVLYMEQLETAFRAAGITVPFSHNEKGQRSQSWSTDYENVGGAVNVYGLDSYPGGLSCTNSNSGFSVVRNYYQWFSNYSYTQPSYFPEFEGGYFTPWGGSFYDECQSELDPSFPDVYYKNNIGQRTTLMSLYMAWGGTNWGHSAAPVVYTSYDYAAPLRETRQIRDKLSQTKLIGLFTRVSTDLLKTDMIGNGTGHSVSSTGIWSWVLRNPDTQAGFTVVQQASSGSRASVTFDVYLNTSLGAVTASDVNLNGRQSKILVTDYNFGNHTLLYASSDILTYGTFDVDVLVFYLEQGQIGQFALKTTSKLTYQVYGNSVFAANSSSTSTSQTFTYTQGAGQTVVQFSDGALVYLLDQPSAWKFWAPPTTSNPQVKPNEQIFVLGPYLVRNASISSGVAQIFGDNDNATTIEVYAGSSLTSIVWNGVSLSATKTKYGSYSASLPGTESRVISLPSLTNWESANSLPEKETSYDDSKWTVCNKTTTLSPIAPLTLPVLFSSDYGFYTGQKIYRGYFDGLTYTSINITCSGGLAFGWSAWLNGVLIGGNTGVATATTTNAVLDLTNFTSVIKSENNLVTVVVDYHGHDETSTAKGVENPRGILGAFLVPKPSASTGFKLWKIQGNAGGSANIDPVRGPMNEGGFYGERVGWHLPSSPSLPSDSTPLIGLNTSGISFYTTNFTLALDSDLDVPLGIKLSAPAGTIARVMFWINGYQYGKYVPHIGPQTVFPIPPGIINNQGSNKLALSLWAMTDAGARLTDVELVSYGVYESGFGFDRDWSYLQPGWDEGRLAYA</sequence>
<evidence type="ECO:0000250" key="1"/>
<evidence type="ECO:0000255" key="2"/>
<evidence type="ECO:0000305" key="3"/>
<dbReference type="EC" id="3.2.1.23"/>
<dbReference type="EMBL" id="CH476636">
    <property type="protein sequence ID" value="EDN94967.1"/>
    <property type="molecule type" value="Genomic_DNA"/>
</dbReference>
<dbReference type="RefSeq" id="XP_001588395.1">
    <property type="nucleotide sequence ID" value="XM_001588345.1"/>
</dbReference>
<dbReference type="SMR" id="A7EZS5"/>
<dbReference type="GlyCosmos" id="A7EZS5">
    <property type="glycosylation" value="12 sites, No reported glycans"/>
</dbReference>
<dbReference type="GeneID" id="5484283"/>
<dbReference type="KEGG" id="ssl:SS1G_10842"/>
<dbReference type="VEuPathDB" id="FungiDB:sscle_09g069470"/>
<dbReference type="InParanoid" id="A7EZS5"/>
<dbReference type="OMA" id="PEFEGGW"/>
<dbReference type="OrthoDB" id="1657402at2759"/>
<dbReference type="Proteomes" id="UP000001312">
    <property type="component" value="Unassembled WGS sequence"/>
</dbReference>
<dbReference type="GO" id="GO:0005576">
    <property type="term" value="C:extracellular region"/>
    <property type="evidence" value="ECO:0007669"/>
    <property type="project" value="UniProtKB-SubCell"/>
</dbReference>
<dbReference type="GO" id="GO:0005773">
    <property type="term" value="C:vacuole"/>
    <property type="evidence" value="ECO:0000318"/>
    <property type="project" value="GO_Central"/>
</dbReference>
<dbReference type="GO" id="GO:0004565">
    <property type="term" value="F:beta-galactosidase activity"/>
    <property type="evidence" value="ECO:0000318"/>
    <property type="project" value="GO_Central"/>
</dbReference>
<dbReference type="GO" id="GO:0019388">
    <property type="term" value="P:galactose catabolic process"/>
    <property type="evidence" value="ECO:0000318"/>
    <property type="project" value="GO_Central"/>
</dbReference>
<dbReference type="GO" id="GO:0000272">
    <property type="term" value="P:polysaccharide catabolic process"/>
    <property type="evidence" value="ECO:0007669"/>
    <property type="project" value="UniProtKB-KW"/>
</dbReference>
<dbReference type="FunFam" id="2.60.120.260:FF:000065">
    <property type="entry name" value="Beta-galactosidase A"/>
    <property type="match status" value="1"/>
</dbReference>
<dbReference type="FunFam" id="3.20.20.80:FF:000040">
    <property type="entry name" value="Beta-galactosidase A"/>
    <property type="match status" value="1"/>
</dbReference>
<dbReference type="Gene3D" id="2.102.20.10">
    <property type="entry name" value="Beta-galactosidase, domain 2"/>
    <property type="match status" value="1"/>
</dbReference>
<dbReference type="Gene3D" id="2.60.390.10">
    <property type="entry name" value="Beta-galactosidase, domain 3"/>
    <property type="match status" value="1"/>
</dbReference>
<dbReference type="Gene3D" id="2.60.120.260">
    <property type="entry name" value="Galactose-binding domain-like"/>
    <property type="match status" value="2"/>
</dbReference>
<dbReference type="Gene3D" id="3.20.20.80">
    <property type="entry name" value="Glycosidases"/>
    <property type="match status" value="1"/>
</dbReference>
<dbReference type="InterPro" id="IPR018954">
    <property type="entry name" value="Betagal_dom2"/>
</dbReference>
<dbReference type="InterPro" id="IPR037110">
    <property type="entry name" value="Betagal_dom2_sf"/>
</dbReference>
<dbReference type="InterPro" id="IPR025972">
    <property type="entry name" value="BetaGal_dom3"/>
</dbReference>
<dbReference type="InterPro" id="IPR036833">
    <property type="entry name" value="BetaGal_dom3_sf"/>
</dbReference>
<dbReference type="InterPro" id="IPR025300">
    <property type="entry name" value="BetaGal_jelly_roll_dom"/>
</dbReference>
<dbReference type="InterPro" id="IPR008979">
    <property type="entry name" value="Galactose-bd-like_sf"/>
</dbReference>
<dbReference type="InterPro" id="IPR031330">
    <property type="entry name" value="Gly_Hdrlase_35_cat"/>
</dbReference>
<dbReference type="InterPro" id="IPR001944">
    <property type="entry name" value="Glycoside_Hdrlase_35"/>
</dbReference>
<dbReference type="InterPro" id="IPR017853">
    <property type="entry name" value="Glycoside_hydrolase_SF"/>
</dbReference>
<dbReference type="PANTHER" id="PTHR23421">
    <property type="entry name" value="BETA-GALACTOSIDASE RELATED"/>
    <property type="match status" value="1"/>
</dbReference>
<dbReference type="Pfam" id="PF13364">
    <property type="entry name" value="BetaGal_ABD2"/>
    <property type="match status" value="2"/>
</dbReference>
<dbReference type="Pfam" id="PF10435">
    <property type="entry name" value="BetaGal_dom2"/>
    <property type="match status" value="1"/>
</dbReference>
<dbReference type="Pfam" id="PF13363">
    <property type="entry name" value="BetaGal_dom3"/>
    <property type="match status" value="1"/>
</dbReference>
<dbReference type="Pfam" id="PF01301">
    <property type="entry name" value="Glyco_hydro_35"/>
    <property type="match status" value="1"/>
</dbReference>
<dbReference type="PRINTS" id="PR00742">
    <property type="entry name" value="GLHYDRLASE35"/>
</dbReference>
<dbReference type="SMART" id="SM01029">
    <property type="entry name" value="BetaGal_dom2"/>
    <property type="match status" value="1"/>
</dbReference>
<dbReference type="SUPFAM" id="SSF51445">
    <property type="entry name" value="(Trans)glycosidases"/>
    <property type="match status" value="1"/>
</dbReference>
<dbReference type="SUPFAM" id="SSF117100">
    <property type="entry name" value="Beta-galactosidase LacA, domain 3"/>
    <property type="match status" value="1"/>
</dbReference>
<dbReference type="SUPFAM" id="SSF49785">
    <property type="entry name" value="Galactose-binding domain-like"/>
    <property type="match status" value="2"/>
</dbReference>
<dbReference type="SUPFAM" id="SSF51011">
    <property type="entry name" value="Glycosyl hydrolase domain"/>
    <property type="match status" value="1"/>
</dbReference>
<feature type="signal peptide" evidence="2">
    <location>
        <begin position="1"/>
        <end position="19"/>
    </location>
</feature>
<feature type="chain" id="PRO_0000395241" description="Probable beta-galactosidase C">
    <location>
        <begin position="20"/>
        <end position="984"/>
    </location>
</feature>
<feature type="active site" description="Proton donor" evidence="2">
    <location>
        <position position="184"/>
    </location>
</feature>
<feature type="active site" description="Nucleophile" evidence="2">
    <location>
        <position position="283"/>
    </location>
</feature>
<feature type="binding site" evidence="1">
    <location>
        <position position="78"/>
    </location>
    <ligand>
        <name>substrate</name>
    </ligand>
</feature>
<feature type="binding site" evidence="1">
    <location>
        <position position="123"/>
    </location>
    <ligand>
        <name>substrate</name>
    </ligand>
</feature>
<feature type="binding site" evidence="1">
    <location>
        <position position="124"/>
    </location>
    <ligand>
        <name>substrate</name>
    </ligand>
</feature>
<feature type="binding site" evidence="1">
    <location>
        <position position="125"/>
    </location>
    <ligand>
        <name>substrate</name>
    </ligand>
</feature>
<feature type="binding site" evidence="1">
    <location>
        <position position="183"/>
    </location>
    <ligand>
        <name>substrate</name>
    </ligand>
</feature>
<feature type="binding site" evidence="1">
    <location>
        <position position="247"/>
    </location>
    <ligand>
        <name>substrate</name>
    </ligand>
</feature>
<feature type="binding site" evidence="1">
    <location>
        <position position="349"/>
    </location>
    <ligand>
        <name>substrate</name>
    </ligand>
</feature>
<feature type="glycosylation site" description="N-linked (GlcNAc...) asparagine" evidence="2">
    <location>
        <position position="272"/>
    </location>
</feature>
<feature type="glycosylation site" description="N-linked (GlcNAc...) asparagine" evidence="2">
    <location>
        <position position="387"/>
    </location>
</feature>
<feature type="glycosylation site" description="N-linked (GlcNAc...) asparagine" evidence="2">
    <location>
        <position position="433"/>
    </location>
</feature>
<feature type="glycosylation site" description="N-linked (GlcNAc...) asparagine" evidence="2">
    <location>
        <position position="462"/>
    </location>
</feature>
<feature type="glycosylation site" description="N-linked (GlcNAc...) asparagine" evidence="2">
    <location>
        <position position="516"/>
    </location>
</feature>
<feature type="glycosylation site" description="N-linked (GlcNAc...) asparagine" evidence="2">
    <location>
        <position position="583"/>
    </location>
</feature>
<feature type="glycosylation site" description="N-linked (GlcNAc...) asparagine" evidence="2">
    <location>
        <position position="599"/>
    </location>
</feature>
<feature type="glycosylation site" description="N-linked (GlcNAc...) asparagine" evidence="2">
    <location>
        <position position="673"/>
    </location>
</feature>
<feature type="glycosylation site" description="N-linked (GlcNAc...) asparagine" evidence="2">
    <location>
        <position position="716"/>
    </location>
</feature>
<feature type="glycosylation site" description="N-linked (GlcNAc...) asparagine" evidence="2">
    <location>
        <position position="756"/>
    </location>
</feature>
<feature type="glycosylation site" description="N-linked (GlcNAc...) asparagine" evidence="2">
    <location>
        <position position="860"/>
    </location>
</feature>
<feature type="glycosylation site" description="N-linked (GlcNAc...) asparagine" evidence="2">
    <location>
        <position position="870"/>
    </location>
</feature>
<feature type="disulfide bond" evidence="1">
    <location>
        <begin position="253"/>
        <end position="300"/>
    </location>
</feature>
<protein>
    <recommendedName>
        <fullName>Probable beta-galactosidase C</fullName>
        <ecNumber>3.2.1.23</ecNumber>
    </recommendedName>
    <alternativeName>
        <fullName>Lactase C</fullName>
    </alternativeName>
</protein>
<reference key="1">
    <citation type="journal article" date="2011" name="PLoS Genet.">
        <title>Genomic analysis of the necrotrophic fungal pathogens Sclerotinia sclerotiorum and Botrytis cinerea.</title>
        <authorList>
            <person name="Amselem J."/>
            <person name="Cuomo C.A."/>
            <person name="van Kan J.A.L."/>
            <person name="Viaud M."/>
            <person name="Benito E.P."/>
            <person name="Couloux A."/>
            <person name="Coutinho P.M."/>
            <person name="de Vries R.P."/>
            <person name="Dyer P.S."/>
            <person name="Fillinger S."/>
            <person name="Fournier E."/>
            <person name="Gout L."/>
            <person name="Hahn M."/>
            <person name="Kohn L."/>
            <person name="Lapalu N."/>
            <person name="Plummer K.M."/>
            <person name="Pradier J.-M."/>
            <person name="Quevillon E."/>
            <person name="Sharon A."/>
            <person name="Simon A."/>
            <person name="ten Have A."/>
            <person name="Tudzynski B."/>
            <person name="Tudzynski P."/>
            <person name="Wincker P."/>
            <person name="Andrew M."/>
            <person name="Anthouard V."/>
            <person name="Beever R.E."/>
            <person name="Beffa R."/>
            <person name="Benoit I."/>
            <person name="Bouzid O."/>
            <person name="Brault B."/>
            <person name="Chen Z."/>
            <person name="Choquer M."/>
            <person name="Collemare J."/>
            <person name="Cotton P."/>
            <person name="Danchin E.G."/>
            <person name="Da Silva C."/>
            <person name="Gautier A."/>
            <person name="Giraud C."/>
            <person name="Giraud T."/>
            <person name="Gonzalez C."/>
            <person name="Grossetete S."/>
            <person name="Gueldener U."/>
            <person name="Henrissat B."/>
            <person name="Howlett B.J."/>
            <person name="Kodira C."/>
            <person name="Kretschmer M."/>
            <person name="Lappartient A."/>
            <person name="Leroch M."/>
            <person name="Levis C."/>
            <person name="Mauceli E."/>
            <person name="Neuveglise C."/>
            <person name="Oeser B."/>
            <person name="Pearson M."/>
            <person name="Poulain J."/>
            <person name="Poussereau N."/>
            <person name="Quesneville H."/>
            <person name="Rascle C."/>
            <person name="Schumacher J."/>
            <person name="Segurens B."/>
            <person name="Sexton A."/>
            <person name="Silva E."/>
            <person name="Sirven C."/>
            <person name="Soanes D.M."/>
            <person name="Talbot N.J."/>
            <person name="Templeton M."/>
            <person name="Yandava C."/>
            <person name="Yarden O."/>
            <person name="Zeng Q."/>
            <person name="Rollins J.A."/>
            <person name="Lebrun M.-H."/>
            <person name="Dickman M."/>
        </authorList>
    </citation>
    <scope>NUCLEOTIDE SEQUENCE [LARGE SCALE GENOMIC DNA]</scope>
    <source>
        <strain>ATCC 18683 / 1980 / Ss-1</strain>
    </source>
</reference>
<comment type="function">
    <text evidence="1">Cleaves beta-linked terminal galactosyl residues from gangliosides, glycoproteins, and glycosaminoglycans.</text>
</comment>
<comment type="catalytic activity">
    <reaction>
        <text>Hydrolysis of terminal non-reducing beta-D-galactose residues in beta-D-galactosides.</text>
        <dbReference type="EC" id="3.2.1.23"/>
    </reaction>
</comment>
<comment type="subcellular location">
    <subcellularLocation>
        <location evidence="1">Secreted</location>
    </subcellularLocation>
</comment>
<comment type="similarity">
    <text evidence="3">Belongs to the glycosyl hydrolase 35 family.</text>
</comment>
<accession>A7EZS5</accession>
<proteinExistence type="inferred from homology"/>
<gene>
    <name type="primary">lacC</name>
    <name type="ORF">SS1G_10842</name>
</gene>